<name>MMP14_MOUSE</name>
<evidence type="ECO:0000250" key="1">
    <source>
        <dbReference type="UniProtKB" id="P03956"/>
    </source>
</evidence>
<evidence type="ECO:0000250" key="2">
    <source>
        <dbReference type="UniProtKB" id="P08253"/>
    </source>
</evidence>
<evidence type="ECO:0000250" key="3">
    <source>
        <dbReference type="UniProtKB" id="P50281"/>
    </source>
</evidence>
<evidence type="ECO:0000255" key="4"/>
<evidence type="ECO:0000255" key="5">
    <source>
        <dbReference type="PROSITE-ProRule" id="PRU10095"/>
    </source>
</evidence>
<evidence type="ECO:0000256" key="6">
    <source>
        <dbReference type="SAM" id="MobiDB-lite"/>
    </source>
</evidence>
<evidence type="ECO:0000269" key="7">
    <source>
    </source>
</evidence>
<evidence type="ECO:0000269" key="8">
    <source>
    </source>
</evidence>
<evidence type="ECO:0000269" key="9">
    <source>
    </source>
</evidence>
<evidence type="ECO:0000269" key="10">
    <source>
    </source>
</evidence>
<evidence type="ECO:0000305" key="11"/>
<evidence type="ECO:0000305" key="12">
    <source>
    </source>
</evidence>
<reference key="1">
    <citation type="journal article" date="1995" name="Proc. Natl. Acad. Sci. U.S.A.">
        <title>Membrane-type matrix metalloproteinase (MT-MMP) gene is expressed in stromal cells of human colon, breast, and head and neck carcinomas.</title>
        <authorList>
            <person name="Okada A."/>
            <person name="Bellocq J.-P."/>
            <person name="Rouyer N."/>
            <person name="Chenard M.P."/>
            <person name="Rio M.C."/>
            <person name="Chambon P."/>
            <person name="Basset P."/>
        </authorList>
    </citation>
    <scope>NUCLEOTIDE SEQUENCE [MRNA]</scope>
</reference>
<reference key="2">
    <citation type="submission" date="1999-12" db="EMBL/GenBank/DDBJ databases">
        <authorList>
            <person name="Odaka A."/>
        </authorList>
    </citation>
    <scope>SEQUENCE REVISION</scope>
</reference>
<reference key="3">
    <citation type="journal article" date="1997" name="J. Biol. Chem.">
        <title>The matrix metalloproteinase-14 (MMP-14) gene is structurally distinct from other MMP genes and is co-expressed with the TIMP-2 gene during mouse embryogenesis.</title>
        <authorList>
            <person name="Apte S.S."/>
            <person name="Fukai N."/>
            <person name="Beier D.R."/>
            <person name="Olsen B.R."/>
        </authorList>
    </citation>
    <scope>NUCLEOTIDE SEQUENCE [GENOMIC DNA]</scope>
    <scope>TISSUE SPECIFICITY</scope>
    <scope>DEVELOPMENTAL STAGE</scope>
    <source>
        <strain>129/Sv</strain>
    </source>
</reference>
<reference key="4">
    <citation type="journal article" date="1998" name="Kidney Int.">
        <title>Cloning of murine membrane-type-1-matrix metalloproteinase (MT-1-MMP) and its metanephric developmental regulation with respect to MMP-2 and its inhibitor.</title>
        <authorList>
            <person name="Ota K."/>
            <person name="Stetler-Stevenson W.G."/>
            <person name="Yang Q."/>
            <person name="Kumar A."/>
            <person name="Wada J."/>
            <person name="Kashihara N."/>
            <person name="Wallner E.I."/>
            <person name="Kanwar Y.S."/>
        </authorList>
    </citation>
    <scope>NUCLEOTIDE SEQUENCE [MRNA]</scope>
    <source>
        <strain>CD-1</strain>
        <tissue>Kidney</tissue>
    </source>
</reference>
<reference key="5">
    <citation type="journal article" date="2006" name="Cancer Res.">
        <title>Interference with the complement system by tumor cell membrane type-1 matrix metalloproteinase plays a significant role in promoting metastasis in mice.</title>
        <authorList>
            <person name="Rozanov D.V."/>
            <person name="Savinov A.Y."/>
            <person name="Golubkov V.S."/>
            <person name="Tomlinson S."/>
            <person name="Strongin A.Y."/>
        </authorList>
    </citation>
    <scope>NUCLEOTIDE SEQUENCE [MRNA]</scope>
    <source>
        <strain>FVB/N</strain>
    </source>
</reference>
<reference key="6">
    <citation type="journal article" date="2005" name="Science">
        <title>The transcriptional landscape of the mammalian genome.</title>
        <authorList>
            <person name="Carninci P."/>
            <person name="Kasukawa T."/>
            <person name="Katayama S."/>
            <person name="Gough J."/>
            <person name="Frith M.C."/>
            <person name="Maeda N."/>
            <person name="Oyama R."/>
            <person name="Ravasi T."/>
            <person name="Lenhard B."/>
            <person name="Wells C."/>
            <person name="Kodzius R."/>
            <person name="Shimokawa K."/>
            <person name="Bajic V.B."/>
            <person name="Brenner S.E."/>
            <person name="Batalov S."/>
            <person name="Forrest A.R."/>
            <person name="Zavolan M."/>
            <person name="Davis M.J."/>
            <person name="Wilming L.G."/>
            <person name="Aidinis V."/>
            <person name="Allen J.E."/>
            <person name="Ambesi-Impiombato A."/>
            <person name="Apweiler R."/>
            <person name="Aturaliya R.N."/>
            <person name="Bailey T.L."/>
            <person name="Bansal M."/>
            <person name="Baxter L."/>
            <person name="Beisel K.W."/>
            <person name="Bersano T."/>
            <person name="Bono H."/>
            <person name="Chalk A.M."/>
            <person name="Chiu K.P."/>
            <person name="Choudhary V."/>
            <person name="Christoffels A."/>
            <person name="Clutterbuck D.R."/>
            <person name="Crowe M.L."/>
            <person name="Dalla E."/>
            <person name="Dalrymple B.P."/>
            <person name="de Bono B."/>
            <person name="Della Gatta G."/>
            <person name="di Bernardo D."/>
            <person name="Down T."/>
            <person name="Engstrom P."/>
            <person name="Fagiolini M."/>
            <person name="Faulkner G."/>
            <person name="Fletcher C.F."/>
            <person name="Fukushima T."/>
            <person name="Furuno M."/>
            <person name="Futaki S."/>
            <person name="Gariboldi M."/>
            <person name="Georgii-Hemming P."/>
            <person name="Gingeras T.R."/>
            <person name="Gojobori T."/>
            <person name="Green R.E."/>
            <person name="Gustincich S."/>
            <person name="Harbers M."/>
            <person name="Hayashi Y."/>
            <person name="Hensch T.K."/>
            <person name="Hirokawa N."/>
            <person name="Hill D."/>
            <person name="Huminiecki L."/>
            <person name="Iacono M."/>
            <person name="Ikeo K."/>
            <person name="Iwama A."/>
            <person name="Ishikawa T."/>
            <person name="Jakt M."/>
            <person name="Kanapin A."/>
            <person name="Katoh M."/>
            <person name="Kawasawa Y."/>
            <person name="Kelso J."/>
            <person name="Kitamura H."/>
            <person name="Kitano H."/>
            <person name="Kollias G."/>
            <person name="Krishnan S.P."/>
            <person name="Kruger A."/>
            <person name="Kummerfeld S.K."/>
            <person name="Kurochkin I.V."/>
            <person name="Lareau L.F."/>
            <person name="Lazarevic D."/>
            <person name="Lipovich L."/>
            <person name="Liu J."/>
            <person name="Liuni S."/>
            <person name="McWilliam S."/>
            <person name="Madan Babu M."/>
            <person name="Madera M."/>
            <person name="Marchionni L."/>
            <person name="Matsuda H."/>
            <person name="Matsuzawa S."/>
            <person name="Miki H."/>
            <person name="Mignone F."/>
            <person name="Miyake S."/>
            <person name="Morris K."/>
            <person name="Mottagui-Tabar S."/>
            <person name="Mulder N."/>
            <person name="Nakano N."/>
            <person name="Nakauchi H."/>
            <person name="Ng P."/>
            <person name="Nilsson R."/>
            <person name="Nishiguchi S."/>
            <person name="Nishikawa S."/>
            <person name="Nori F."/>
            <person name="Ohara O."/>
            <person name="Okazaki Y."/>
            <person name="Orlando V."/>
            <person name="Pang K.C."/>
            <person name="Pavan W.J."/>
            <person name="Pavesi G."/>
            <person name="Pesole G."/>
            <person name="Petrovsky N."/>
            <person name="Piazza S."/>
            <person name="Reed J."/>
            <person name="Reid J.F."/>
            <person name="Ring B.Z."/>
            <person name="Ringwald M."/>
            <person name="Rost B."/>
            <person name="Ruan Y."/>
            <person name="Salzberg S.L."/>
            <person name="Sandelin A."/>
            <person name="Schneider C."/>
            <person name="Schoenbach C."/>
            <person name="Sekiguchi K."/>
            <person name="Semple C.A."/>
            <person name="Seno S."/>
            <person name="Sessa L."/>
            <person name="Sheng Y."/>
            <person name="Shibata Y."/>
            <person name="Shimada H."/>
            <person name="Shimada K."/>
            <person name="Silva D."/>
            <person name="Sinclair B."/>
            <person name="Sperling S."/>
            <person name="Stupka E."/>
            <person name="Sugiura K."/>
            <person name="Sultana R."/>
            <person name="Takenaka Y."/>
            <person name="Taki K."/>
            <person name="Tammoja K."/>
            <person name="Tan S.L."/>
            <person name="Tang S."/>
            <person name="Taylor M.S."/>
            <person name="Tegner J."/>
            <person name="Teichmann S.A."/>
            <person name="Ueda H.R."/>
            <person name="van Nimwegen E."/>
            <person name="Verardo R."/>
            <person name="Wei C.L."/>
            <person name="Yagi K."/>
            <person name="Yamanishi H."/>
            <person name="Zabarovsky E."/>
            <person name="Zhu S."/>
            <person name="Zimmer A."/>
            <person name="Hide W."/>
            <person name="Bult C."/>
            <person name="Grimmond S.M."/>
            <person name="Teasdale R.D."/>
            <person name="Liu E.T."/>
            <person name="Brusic V."/>
            <person name="Quackenbush J."/>
            <person name="Wahlestedt C."/>
            <person name="Mattick J.S."/>
            <person name="Hume D.A."/>
            <person name="Kai C."/>
            <person name="Sasaki D."/>
            <person name="Tomaru Y."/>
            <person name="Fukuda S."/>
            <person name="Kanamori-Katayama M."/>
            <person name="Suzuki M."/>
            <person name="Aoki J."/>
            <person name="Arakawa T."/>
            <person name="Iida J."/>
            <person name="Imamura K."/>
            <person name="Itoh M."/>
            <person name="Kato T."/>
            <person name="Kawaji H."/>
            <person name="Kawagashira N."/>
            <person name="Kawashima T."/>
            <person name="Kojima M."/>
            <person name="Kondo S."/>
            <person name="Konno H."/>
            <person name="Nakano K."/>
            <person name="Ninomiya N."/>
            <person name="Nishio T."/>
            <person name="Okada M."/>
            <person name="Plessy C."/>
            <person name="Shibata K."/>
            <person name="Shiraki T."/>
            <person name="Suzuki S."/>
            <person name="Tagami M."/>
            <person name="Waki K."/>
            <person name="Watahiki A."/>
            <person name="Okamura-Oho Y."/>
            <person name="Suzuki H."/>
            <person name="Kawai J."/>
            <person name="Hayashizaki Y."/>
        </authorList>
    </citation>
    <scope>NUCLEOTIDE SEQUENCE [LARGE SCALE MRNA]</scope>
    <source>
        <strain>C57BL/6J</strain>
        <strain>NOD</strain>
        <tissue>Bone marrow</tissue>
        <tissue>Eye</tissue>
        <tissue>Spinal cord</tissue>
        <tissue>Thymus</tissue>
    </source>
</reference>
<reference key="7">
    <citation type="submission" date="2005-07" db="EMBL/GenBank/DDBJ databases">
        <authorList>
            <person name="Mural R.J."/>
            <person name="Adams M.D."/>
            <person name="Myers E.W."/>
            <person name="Smith H.O."/>
            <person name="Venter J.C."/>
        </authorList>
    </citation>
    <scope>NUCLEOTIDE SEQUENCE [LARGE SCALE GENOMIC DNA]</scope>
</reference>
<reference key="8">
    <citation type="journal article" date="1999" name="Cell">
        <title>MT1-MMP-deficient mice develop dwarfism, osteopenia, arthritis, and connective tissue disease due to inadequate collagen turnover.</title>
        <authorList>
            <person name="Holmbeck K."/>
            <person name="Bianco P."/>
            <person name="Caterina J."/>
            <person name="Yamada S."/>
            <person name="Kromer M."/>
            <person name="Kuznetsov S.A."/>
            <person name="Mankani M."/>
            <person name="Robey P.G."/>
            <person name="Poole A.R."/>
            <person name="Pidoux I."/>
            <person name="Ward J.M."/>
            <person name="Birkedal-Hansen H."/>
        </authorList>
    </citation>
    <scope>FUNCTION</scope>
    <scope>DISRUPTION PHENOTYPE</scope>
</reference>
<reference key="9">
    <citation type="journal article" date="2000" name="Proc. Natl. Acad. Sci. U.S.A.">
        <title>Impaired endochondral ossification and angiogenesis in mice deficient in membrane-type matrix metalloproteinase I.</title>
        <authorList>
            <person name="Zhou Z."/>
            <person name="Apte S.S."/>
            <person name="Soininen R."/>
            <person name="Cao R."/>
            <person name="Baaklini G.Y."/>
            <person name="Rauser R.W."/>
            <person name="Wang J."/>
            <person name="Cao Y."/>
            <person name="Tryggvason K."/>
        </authorList>
    </citation>
    <scope>FUNCTION</scope>
    <scope>DISRUPTION PHENOTYPE</scope>
    <scope>CATALYTIC ACTIVITY</scope>
</reference>
<reference key="10">
    <citation type="journal article" date="2022" name="Nat. Metab.">
        <title>Body weight regulation via MT1-MMP-mediated cleavage of GFRAL.</title>
        <authorList>
            <person name="Chow C.F.W."/>
            <person name="Guo X."/>
            <person name="Asthana P."/>
            <person name="Zhang S."/>
            <person name="Wong S.K.K."/>
            <person name="Fallah S."/>
            <person name="Che S."/>
            <person name="Gurung S."/>
            <person name="Wang Z."/>
            <person name="Lee K.B."/>
            <person name="Ge X."/>
            <person name="Yuan S."/>
            <person name="Xu H."/>
            <person name="Ip J.P.K."/>
            <person name="Jiang Z."/>
            <person name="Zhai L."/>
            <person name="Wu J."/>
            <person name="Zhang Y."/>
            <person name="Mahato A.K."/>
            <person name="Saarma M."/>
            <person name="Lin C.Y."/>
            <person name="Kwan H.Y."/>
            <person name="Huang T."/>
            <person name="Lyu A."/>
            <person name="Zhou Z."/>
            <person name="Bian Z.X."/>
            <person name="Wong H.L.X."/>
        </authorList>
    </citation>
    <scope>FUNCTION</scope>
</reference>
<keyword id="KW-0106">Calcium</keyword>
<keyword id="KW-1003">Cell membrane</keyword>
<keyword id="KW-0165">Cleavage on pair of basic residues</keyword>
<keyword id="KW-0177">Collagen degradation</keyword>
<keyword id="KW-0963">Cytoplasm</keyword>
<keyword id="KW-1015">Disulfide bond</keyword>
<keyword id="KW-0378">Hydrolase</keyword>
<keyword id="KW-0472">Membrane</keyword>
<keyword id="KW-0479">Metal-binding</keyword>
<keyword id="KW-0482">Metalloprotease</keyword>
<keyword id="KW-0597">Phosphoprotein</keyword>
<keyword id="KW-0645">Protease</keyword>
<keyword id="KW-1185">Reference proteome</keyword>
<keyword id="KW-0677">Repeat</keyword>
<keyword id="KW-0732">Signal</keyword>
<keyword id="KW-0812">Transmembrane</keyword>
<keyword id="KW-1133">Transmembrane helix</keyword>
<keyword id="KW-0862">Zinc</keyword>
<keyword id="KW-0865">Zymogen</keyword>
<proteinExistence type="evidence at protein level"/>
<feature type="signal peptide" evidence="4">
    <location>
        <begin position="1"/>
        <end position="20"/>
    </location>
</feature>
<feature type="propeptide" id="PRO_0000028800" evidence="3">
    <location>
        <begin position="21"/>
        <end position="111"/>
    </location>
</feature>
<feature type="chain" id="PRO_0000028801" description="Matrix metalloproteinase-14">
    <location>
        <begin position="112"/>
        <end position="582"/>
    </location>
</feature>
<feature type="topological domain" description="Extracellular" evidence="4">
    <location>
        <begin position="112"/>
        <end position="541"/>
    </location>
</feature>
<feature type="transmembrane region" description="Helical" evidence="4">
    <location>
        <begin position="542"/>
        <end position="562"/>
    </location>
</feature>
<feature type="topological domain" description="Cytoplasmic" evidence="4">
    <location>
        <begin position="563"/>
        <end position="582"/>
    </location>
</feature>
<feature type="repeat" description="Hemopexin 1">
    <location>
        <begin position="316"/>
        <end position="364"/>
    </location>
</feature>
<feature type="repeat" description="Hemopexin 2">
    <location>
        <begin position="365"/>
        <end position="410"/>
    </location>
</feature>
<feature type="repeat" description="Hemopexin 3">
    <location>
        <begin position="412"/>
        <end position="460"/>
    </location>
</feature>
<feature type="repeat" description="Hemopexin 4">
    <location>
        <begin position="461"/>
        <end position="508"/>
    </location>
</feature>
<feature type="region of interest" description="Disordered" evidence="6">
    <location>
        <begin position="280"/>
        <end position="316"/>
    </location>
</feature>
<feature type="short sequence motif" description="Cysteine switch" evidence="1">
    <location>
        <begin position="91"/>
        <end position="98"/>
    </location>
</feature>
<feature type="active site" evidence="5">
    <location>
        <position position="240"/>
    </location>
</feature>
<feature type="binding site" description="in inhibited form" evidence="1">
    <location>
        <position position="93"/>
    </location>
    <ligand>
        <name>Zn(2+)</name>
        <dbReference type="ChEBI" id="CHEBI:29105"/>
        <label>2</label>
        <note>catalytic</note>
    </ligand>
</feature>
<feature type="binding site" evidence="3">
    <location>
        <position position="186"/>
    </location>
    <ligand>
        <name>Zn(2+)</name>
        <dbReference type="ChEBI" id="CHEBI:29105"/>
        <label>1</label>
        <note>structural</note>
    </ligand>
</feature>
<feature type="binding site" evidence="3">
    <location>
        <position position="188"/>
    </location>
    <ligand>
        <name>Zn(2+)</name>
        <dbReference type="ChEBI" id="CHEBI:29105"/>
        <label>1</label>
        <note>structural</note>
    </ligand>
</feature>
<feature type="binding site" evidence="3">
    <location>
        <position position="193"/>
    </location>
    <ligand>
        <name>Ca(2+)</name>
        <dbReference type="ChEBI" id="CHEBI:29108"/>
        <label>2</label>
    </ligand>
</feature>
<feature type="binding site" evidence="3">
    <location>
        <position position="194"/>
    </location>
    <ligand>
        <name>Ca(2+)</name>
        <dbReference type="ChEBI" id="CHEBI:29108"/>
        <label>2</label>
    </ligand>
</feature>
<feature type="binding site" evidence="3">
    <location>
        <position position="196"/>
    </location>
    <ligand>
        <name>Ca(2+)</name>
        <dbReference type="ChEBI" id="CHEBI:29108"/>
        <label>2</label>
    </ligand>
</feature>
<feature type="binding site" evidence="3">
    <location>
        <position position="198"/>
    </location>
    <ligand>
        <name>Ca(2+)</name>
        <dbReference type="ChEBI" id="CHEBI:29108"/>
        <label>2</label>
    </ligand>
</feature>
<feature type="binding site" evidence="3">
    <location>
        <position position="201"/>
    </location>
    <ligand>
        <name>Zn(2+)</name>
        <dbReference type="ChEBI" id="CHEBI:29105"/>
        <label>1</label>
        <note>structural</note>
    </ligand>
</feature>
<feature type="binding site" evidence="3">
    <location>
        <position position="208"/>
    </location>
    <ligand>
        <name>Ca(2+)</name>
        <dbReference type="ChEBI" id="CHEBI:29108"/>
        <label>1</label>
    </ligand>
</feature>
<feature type="binding site" evidence="3">
    <location>
        <position position="210"/>
    </location>
    <ligand>
        <name>Ca(2+)</name>
        <dbReference type="ChEBI" id="CHEBI:29108"/>
        <label>1</label>
    </ligand>
</feature>
<feature type="binding site" evidence="3">
    <location>
        <position position="212"/>
    </location>
    <ligand>
        <name>Ca(2+)</name>
        <dbReference type="ChEBI" id="CHEBI:29108"/>
        <label>1</label>
    </ligand>
</feature>
<feature type="binding site" evidence="3">
    <location>
        <position position="214"/>
    </location>
    <ligand>
        <name>Zn(2+)</name>
        <dbReference type="ChEBI" id="CHEBI:29105"/>
        <label>1</label>
        <note>structural</note>
    </ligand>
</feature>
<feature type="binding site" evidence="3">
    <location>
        <position position="216"/>
    </location>
    <ligand>
        <name>Ca(2+)</name>
        <dbReference type="ChEBI" id="CHEBI:29108"/>
        <label>2</label>
    </ligand>
</feature>
<feature type="binding site" evidence="3">
    <location>
        <position position="219"/>
    </location>
    <ligand>
        <name>Ca(2+)</name>
        <dbReference type="ChEBI" id="CHEBI:29108"/>
        <label>2</label>
    </ligand>
</feature>
<feature type="binding site" evidence="3">
    <location>
        <position position="239"/>
    </location>
    <ligand>
        <name>Zn(2+)</name>
        <dbReference type="ChEBI" id="CHEBI:29105"/>
        <label>2</label>
        <note>catalytic</note>
    </ligand>
</feature>
<feature type="binding site" evidence="3">
    <location>
        <position position="243"/>
    </location>
    <ligand>
        <name>Zn(2+)</name>
        <dbReference type="ChEBI" id="CHEBI:29105"/>
        <label>2</label>
        <note>catalytic</note>
    </ligand>
</feature>
<feature type="binding site" evidence="3">
    <location>
        <position position="249"/>
    </location>
    <ligand>
        <name>Zn(2+)</name>
        <dbReference type="ChEBI" id="CHEBI:29105"/>
        <label>2</label>
        <note>catalytic</note>
    </ligand>
</feature>
<feature type="modified residue" description="Phosphotyrosine; by PKDCC" evidence="3">
    <location>
        <position position="399"/>
    </location>
</feature>
<feature type="disulfide bond" evidence="2">
    <location>
        <begin position="319"/>
        <end position="508"/>
    </location>
</feature>
<feature type="sequence conflict" description="In Ref. 3; AAB86602." evidence="11" ref="3">
    <original>P</original>
    <variation>S</variation>
    <location>
        <position position="133"/>
    </location>
</feature>
<feature type="sequence conflict" description="In Ref. 1; CAA58520." evidence="11" ref="1">
    <original>A</original>
    <variation>D</variation>
    <location>
        <position position="255"/>
    </location>
</feature>
<feature type="sequence conflict" description="In Ref. 1; CAA58520 and 4; AAB51753." evidence="11" ref="1 4">
    <original>A</original>
    <variation>S</variation>
    <location>
        <position position="258"/>
    </location>
</feature>
<feature type="sequence conflict" description="In Ref. 1; CAA58520." evidence="11" ref="1">
    <original>F</original>
    <variation>L</variation>
    <location>
        <position position="341"/>
    </location>
</feature>
<feature type="sequence conflict" description="In Ref. 3; AAB86602." evidence="11" ref="3">
    <original>N</original>
    <variation>P</variation>
    <location>
        <position position="346"/>
    </location>
</feature>
<feature type="sequence conflict" description="In Ref. 1; CAA58520." evidence="11" ref="1">
    <original>K</original>
    <variation>T</variation>
    <location>
        <position position="378"/>
    </location>
</feature>
<feature type="sequence conflict" description="In Ref. 1; CAA58520." evidence="11" ref="1">
    <original>FD</original>
    <variation>CV</variation>
    <location>
        <begin position="390"/>
        <end position="391"/>
    </location>
</feature>
<feature type="sequence conflict" description="In Ref. 1; CAA58520." evidence="11" ref="1">
    <original>PK</original>
    <variation>AN</variation>
    <location>
        <begin position="400"/>
        <end position="401"/>
    </location>
</feature>
<feature type="sequence conflict" description="In Ref. 1; CAA58520." evidence="11" ref="1">
    <original>G</original>
    <variation>V</variation>
    <location>
        <position position="407"/>
    </location>
</feature>
<feature type="sequence conflict" description="In Ref. 1; CAA58520." evidence="11" ref="1">
    <original>T</original>
    <variation>S</variation>
    <location>
        <position position="412"/>
    </location>
</feature>
<feature type="sequence conflict" description="In Ref. 1; CAA58520." evidence="11" ref="1">
    <original>A</original>
    <variation>T</variation>
    <location>
        <position position="417"/>
    </location>
</feature>
<feature type="sequence conflict" description="In Ref. 4; AAB51753." evidence="11" ref="4">
    <original>G</original>
    <variation>R</variation>
    <location>
        <position position="512"/>
    </location>
</feature>
<gene>
    <name type="primary">Mmp14</name>
    <name type="synonym">Mtmmp</name>
</gene>
<sequence length="582" mass="65919">MSPAPRPSRSLLLPLLTLGTALASLGWAQGSNFSPEAWLQQYGYLPPGDLRTHTQRSPQSLSAAIAAMQKFYGLQVTGKADLATMMAMRRPRCGVPDKFGTEIKANVRRKRYAIQGLKWQHNEITFCIQNYTPKVGEYATFEAIRKAFRVWESATPLRFREVPYAYIREGHEKQADIMILFAEGFHGDSTPFDGEGGFLAHAYFPGPNIGGDTHFDSAEPWTVQNEDLNGNDIFLVAVHELGHALGLEHSNDPSAIMAPFYQWMDTENFVLPDDDRRGIQQLYGSKSGSPTKMPPQPRTTSRPSVPDKPKNPAYGPNICDGNFDTVAMLRGEMFVFKERWFWRVRNNQVMDGYPMPIGQFWRGLPASINTAYERKDGKFVFFKGDKHWVFDEASLEPGYPKHIKELGRGLPTDKIDAALFWMPNGKTYFFRGNKYYRFNEEFRAVDSEYPKNIKVWEGIPESPRGSFMGSDEVFTYFYKGNKYWKFNNQKLKVEPGYPKSALRDWMGCPSGGRPDEGTEEETEVIIIEVDEEGSGAVSAAAVVLPVLLLLLVLAVGLAVFFFRRHGTPKRLLYCQRSLLDKV</sequence>
<accession>P53690</accession>
<accession>O08645</accession>
<accession>O35369</accession>
<accession>Q8BTX2</accession>
<comment type="function">
    <text evidence="3 7 8 9">Endopeptidase that degrades various components of the extracellular matrix such as collagen (PubMed:10520996, PubMed:10737763). Essential for pericellular collagenolysis and modeling of skeletal and extraskeletal connective tissues during development (PubMed:10520996, PubMed:10737763). Activates progelatinase A/MMP2, thereby acting as a positive regulator of cell growth and migration (PubMed:10737763). Involved in the formation of the fibrovascular tissues in association with pro-MMP2 (By similarity). May be involved in actin cytoskeleton reorganization by cleaving PTK7 (By similarity). Acts as a regulator of Notch signaling by mediating cleavage and inhibition of DLL1 (By similarity). Cleaves ADGRB1 to release vasculostatin-40 which inhibits angiogenesis (By similarity). Acts as a negative regulator of the GDF15-GFRAL aversive response by mediating cleavage and inactivation of GFRAL (PubMed:35177851).</text>
</comment>
<comment type="catalytic activity">
    <reaction evidence="12">
        <text>Endopeptidase activity. Activates progelatinase A by cleavage of the propeptide at 37-Asn-|-Leu-38. Other bonds hydrolyzed include 35-Gly-|-Ile-36 in the propeptide of collagenase 3, and 341-Asn-|-Phe-342, 441-Asp-|-Leu-442 and 354-Gln-|-Thr-355 in the aggrecan interglobular domain.</text>
        <dbReference type="EC" id="3.4.24.80"/>
    </reaction>
</comment>
<comment type="cofactor">
    <cofactor evidence="3">
        <name>Zn(2+)</name>
        <dbReference type="ChEBI" id="CHEBI:29105"/>
    </cofactor>
    <text evidence="3">Binds 1 zinc ion per subunit.</text>
</comment>
<comment type="cofactor">
    <cofactor evidence="3">
        <name>Ca(2+)</name>
        <dbReference type="ChEBI" id="CHEBI:29108"/>
    </cofactor>
</comment>
<comment type="subunit">
    <text evidence="3">Interacts (via C-terminal cytoplasmic tail) with BST2.</text>
</comment>
<comment type="subcellular location">
    <subcellularLocation>
        <location evidence="3">Cell membrane</location>
        <topology evidence="3">Single-pass type I membrane protein</topology>
    </subcellularLocation>
    <subcellularLocation>
        <location evidence="3">Melanosome</location>
    </subcellularLocation>
    <subcellularLocation>
        <location evidence="3">Cytoplasm</location>
    </subcellularLocation>
    <text evidence="3">Identified by mass spectrometry in melanosome fractions from stage I to stage IV. Forms a complex with BST2 and localizes to the cytoplasm.</text>
</comment>
<comment type="tissue specificity">
    <text evidence="10">Highly expressed in placenta, kidney, heart, lung, embryonic skeletal and periskeletal tissues.</text>
</comment>
<comment type="developmental stage">
    <text evidence="10">Not detected before day 10.5. At day 12.5, prominently expressed in large arteries and the umbilical arteries, expressed at lower levels in the myocardium, craniofacial mesenchyme, nasal epithelium and liver capsule. At days 14.5 and 17.5, expressed in the musculoskeletal system, and ossification areas, with continued expression in the arterial tunica media.</text>
</comment>
<comment type="domain">
    <text evidence="1">The conserved cysteine present in the cysteine-switch motif binds the catalytic zinc ion, thus inhibiting the enzyme. The dissociation of the cysteine from the zinc ion upon the activation-peptide release activates the enzyme.</text>
</comment>
<comment type="PTM">
    <text evidence="3">The precursor is cleaved by a furin endopeptidase.</text>
</comment>
<comment type="PTM">
    <text evidence="3">Tyrosine phosphorylated by PKDCC/VLK.</text>
</comment>
<comment type="disruption phenotype">
    <text evidence="7 8">mice display severe defects in skeletal development and angiogenesis (PubMed:10520996, PubMed:10737763). The craniofacial, axial and appendicular skeletons were severely affected, leading to a short and domed skull, marked deceleration of postnatal growth, leading to premature death by 3 weeks of age (PubMed:10520996, PubMed:10737763).</text>
</comment>
<comment type="similarity">
    <text evidence="11">Belongs to the peptidase M10A family.</text>
</comment>
<organism>
    <name type="scientific">Mus musculus</name>
    <name type="common">Mouse</name>
    <dbReference type="NCBI Taxonomy" id="10090"/>
    <lineage>
        <taxon>Eukaryota</taxon>
        <taxon>Metazoa</taxon>
        <taxon>Chordata</taxon>
        <taxon>Craniata</taxon>
        <taxon>Vertebrata</taxon>
        <taxon>Euteleostomi</taxon>
        <taxon>Mammalia</taxon>
        <taxon>Eutheria</taxon>
        <taxon>Euarchontoglires</taxon>
        <taxon>Glires</taxon>
        <taxon>Rodentia</taxon>
        <taxon>Myomorpha</taxon>
        <taxon>Muroidea</taxon>
        <taxon>Muridae</taxon>
        <taxon>Murinae</taxon>
        <taxon>Mus</taxon>
        <taxon>Mus</taxon>
    </lineage>
</organism>
<dbReference type="EC" id="3.4.24.80" evidence="12"/>
<dbReference type="EMBL" id="X83536">
    <property type="protein sequence ID" value="CAA58520.2"/>
    <property type="molecule type" value="mRNA"/>
</dbReference>
<dbReference type="EMBL" id="AF022432">
    <property type="protein sequence ID" value="AAB86602.1"/>
    <property type="molecule type" value="Genomic_DNA"/>
</dbReference>
<dbReference type="EMBL" id="AF022424">
    <property type="protein sequence ID" value="AAB86602.1"/>
    <property type="status" value="JOINED"/>
    <property type="molecule type" value="Genomic_DNA"/>
</dbReference>
<dbReference type="EMBL" id="AF022425">
    <property type="protein sequence ID" value="AAB86602.1"/>
    <property type="status" value="JOINED"/>
    <property type="molecule type" value="Genomic_DNA"/>
</dbReference>
<dbReference type="EMBL" id="AF022426">
    <property type="protein sequence ID" value="AAB86602.1"/>
    <property type="status" value="JOINED"/>
    <property type="molecule type" value="Genomic_DNA"/>
</dbReference>
<dbReference type="EMBL" id="AF022427">
    <property type="protein sequence ID" value="AAB86602.1"/>
    <property type="status" value="JOINED"/>
    <property type="molecule type" value="Genomic_DNA"/>
</dbReference>
<dbReference type="EMBL" id="AF022428">
    <property type="protein sequence ID" value="AAB86602.1"/>
    <property type="status" value="JOINED"/>
    <property type="molecule type" value="Genomic_DNA"/>
</dbReference>
<dbReference type="EMBL" id="AF022429">
    <property type="protein sequence ID" value="AAB86602.1"/>
    <property type="status" value="JOINED"/>
    <property type="molecule type" value="Genomic_DNA"/>
</dbReference>
<dbReference type="EMBL" id="AF022430">
    <property type="protein sequence ID" value="AAB86602.1"/>
    <property type="status" value="JOINED"/>
    <property type="molecule type" value="Genomic_DNA"/>
</dbReference>
<dbReference type="EMBL" id="AF022431">
    <property type="protein sequence ID" value="AAB86602.1"/>
    <property type="status" value="JOINED"/>
    <property type="molecule type" value="Genomic_DNA"/>
</dbReference>
<dbReference type="EMBL" id="U54984">
    <property type="protein sequence ID" value="AAB51753.1"/>
    <property type="molecule type" value="mRNA"/>
</dbReference>
<dbReference type="EMBL" id="DQ249870">
    <property type="protein sequence ID" value="ABB45784.1"/>
    <property type="molecule type" value="mRNA"/>
</dbReference>
<dbReference type="EMBL" id="AK088476">
    <property type="protein sequence ID" value="BAC40377.1"/>
    <property type="molecule type" value="mRNA"/>
</dbReference>
<dbReference type="EMBL" id="AK138611">
    <property type="protein sequence ID" value="BAE23719.1"/>
    <property type="molecule type" value="mRNA"/>
</dbReference>
<dbReference type="EMBL" id="AK149907">
    <property type="protein sequence ID" value="BAE29158.1"/>
    <property type="molecule type" value="mRNA"/>
</dbReference>
<dbReference type="EMBL" id="AK149988">
    <property type="protein sequence ID" value="BAE29216.1"/>
    <property type="molecule type" value="mRNA"/>
</dbReference>
<dbReference type="EMBL" id="AK165014">
    <property type="protein sequence ID" value="BAE38000.1"/>
    <property type="molecule type" value="mRNA"/>
</dbReference>
<dbReference type="EMBL" id="CH466535">
    <property type="protein sequence ID" value="EDL36348.1"/>
    <property type="molecule type" value="Genomic_DNA"/>
</dbReference>
<dbReference type="CCDS" id="CCDS36922.1"/>
<dbReference type="PIR" id="I48673">
    <property type="entry name" value="I48673"/>
</dbReference>
<dbReference type="RefSeq" id="NP_032634.3">
    <property type="nucleotide sequence ID" value="NM_008608.4"/>
</dbReference>
<dbReference type="BMRB" id="P53690"/>
<dbReference type="SMR" id="P53690"/>
<dbReference type="BioGRID" id="201446">
    <property type="interactions" value="8"/>
</dbReference>
<dbReference type="FunCoup" id="P53690">
    <property type="interactions" value="663"/>
</dbReference>
<dbReference type="IntAct" id="P53690">
    <property type="interactions" value="1"/>
</dbReference>
<dbReference type="MINT" id="P53690"/>
<dbReference type="STRING" id="10090.ENSMUSP00000087119"/>
<dbReference type="ChEMBL" id="CHEMBL4295783"/>
<dbReference type="MEROPS" id="M10.014"/>
<dbReference type="iPTMnet" id="P53690"/>
<dbReference type="PhosphoSitePlus" id="P53690"/>
<dbReference type="SwissPalm" id="P53690"/>
<dbReference type="jPOST" id="P53690"/>
<dbReference type="PaxDb" id="10090-ENSMUSP00000087119"/>
<dbReference type="PeptideAtlas" id="P53690"/>
<dbReference type="ProteomicsDB" id="291371"/>
<dbReference type="Pumba" id="P53690"/>
<dbReference type="Antibodypedia" id="4088">
    <property type="antibodies" value="1096 antibodies from 44 providers"/>
</dbReference>
<dbReference type="DNASU" id="17387"/>
<dbReference type="Ensembl" id="ENSMUST00000089688.6">
    <property type="protein sequence ID" value="ENSMUSP00000087119.5"/>
    <property type="gene ID" value="ENSMUSG00000000957.12"/>
</dbReference>
<dbReference type="GeneID" id="17387"/>
<dbReference type="KEGG" id="mmu:17387"/>
<dbReference type="UCSC" id="uc007twc.2">
    <property type="organism name" value="mouse"/>
</dbReference>
<dbReference type="AGR" id="MGI:101900"/>
<dbReference type="CTD" id="4323"/>
<dbReference type="MGI" id="MGI:101900">
    <property type="gene designation" value="Mmp14"/>
</dbReference>
<dbReference type="VEuPathDB" id="HostDB:ENSMUSG00000000957"/>
<dbReference type="eggNOG" id="KOG1565">
    <property type="taxonomic scope" value="Eukaryota"/>
</dbReference>
<dbReference type="GeneTree" id="ENSGT00940000157808"/>
<dbReference type="HOGENOM" id="CLU_015489_8_1_1"/>
<dbReference type="InParanoid" id="P53690"/>
<dbReference type="OMA" id="EPQADIM"/>
<dbReference type="OrthoDB" id="406838at2759"/>
<dbReference type="PhylomeDB" id="P53690"/>
<dbReference type="TreeFam" id="TF352396"/>
<dbReference type="BRENDA" id="3.4.24.80">
    <property type="organism ID" value="3474"/>
</dbReference>
<dbReference type="Reactome" id="R-MMU-1442490">
    <property type="pathway name" value="Collagen degradation"/>
</dbReference>
<dbReference type="Reactome" id="R-MMU-1474228">
    <property type="pathway name" value="Degradation of the extracellular matrix"/>
</dbReference>
<dbReference type="Reactome" id="R-MMU-1592389">
    <property type="pathway name" value="Activation of Matrix Metalloproteinases"/>
</dbReference>
<dbReference type="Reactome" id="R-MMU-9839383">
    <property type="pathway name" value="TGFBR3 PTM regulation"/>
</dbReference>
<dbReference type="BioGRID-ORCS" id="17387">
    <property type="hits" value="0 hits in 80 CRISPR screens"/>
</dbReference>
<dbReference type="ChiTaRS" id="Mmp14">
    <property type="organism name" value="mouse"/>
</dbReference>
<dbReference type="PRO" id="PR:P53690"/>
<dbReference type="Proteomes" id="UP000000589">
    <property type="component" value="Chromosome 14"/>
</dbReference>
<dbReference type="RNAct" id="P53690">
    <property type="molecule type" value="protein"/>
</dbReference>
<dbReference type="Bgee" id="ENSMUSG00000000957">
    <property type="expression patterns" value="Expressed in vault of skull and 255 other cell types or tissues"/>
</dbReference>
<dbReference type="ExpressionAtlas" id="P53690">
    <property type="expression patterns" value="baseline and differential"/>
</dbReference>
<dbReference type="GO" id="GO:0005829">
    <property type="term" value="C:cytosol"/>
    <property type="evidence" value="ECO:0007669"/>
    <property type="project" value="Ensembl"/>
</dbReference>
<dbReference type="GO" id="GO:0031012">
    <property type="term" value="C:extracellular matrix"/>
    <property type="evidence" value="ECO:0007669"/>
    <property type="project" value="InterPro"/>
</dbReference>
<dbReference type="GO" id="GO:0005615">
    <property type="term" value="C:extracellular space"/>
    <property type="evidence" value="ECO:0007669"/>
    <property type="project" value="Ensembl"/>
</dbReference>
<dbReference type="GO" id="GO:0000139">
    <property type="term" value="C:Golgi membrane"/>
    <property type="evidence" value="ECO:0000304"/>
    <property type="project" value="Reactome"/>
</dbReference>
<dbReference type="GO" id="GO:0045111">
    <property type="term" value="C:intermediate filament cytoskeleton"/>
    <property type="evidence" value="ECO:0007669"/>
    <property type="project" value="Ensembl"/>
</dbReference>
<dbReference type="GO" id="GO:0044354">
    <property type="term" value="C:macropinosome"/>
    <property type="evidence" value="ECO:0007669"/>
    <property type="project" value="Ensembl"/>
</dbReference>
<dbReference type="GO" id="GO:0042470">
    <property type="term" value="C:melanosome"/>
    <property type="evidence" value="ECO:0007669"/>
    <property type="project" value="UniProtKB-SubCell"/>
</dbReference>
<dbReference type="GO" id="GO:0005634">
    <property type="term" value="C:nucleus"/>
    <property type="evidence" value="ECO:0007669"/>
    <property type="project" value="Ensembl"/>
</dbReference>
<dbReference type="GO" id="GO:0005886">
    <property type="term" value="C:plasma membrane"/>
    <property type="evidence" value="ECO:0000304"/>
    <property type="project" value="Reactome"/>
</dbReference>
<dbReference type="GO" id="GO:0005178">
    <property type="term" value="F:integrin binding"/>
    <property type="evidence" value="ECO:0007669"/>
    <property type="project" value="Ensembl"/>
</dbReference>
<dbReference type="GO" id="GO:0070006">
    <property type="term" value="F:metalloaminopeptidase activity"/>
    <property type="evidence" value="ECO:0007669"/>
    <property type="project" value="Ensembl"/>
</dbReference>
<dbReference type="GO" id="GO:0004222">
    <property type="term" value="F:metalloendopeptidase activity"/>
    <property type="evidence" value="ECO:0000314"/>
    <property type="project" value="UniProtKB"/>
</dbReference>
<dbReference type="GO" id="GO:0008270">
    <property type="term" value="F:zinc ion binding"/>
    <property type="evidence" value="ECO:0007669"/>
    <property type="project" value="InterPro"/>
</dbReference>
<dbReference type="GO" id="GO:0001525">
    <property type="term" value="P:angiogenesis"/>
    <property type="evidence" value="ECO:0007669"/>
    <property type="project" value="Ensembl"/>
</dbReference>
<dbReference type="GO" id="GO:0043615">
    <property type="term" value="P:astrocyte cell migration"/>
    <property type="evidence" value="ECO:0007669"/>
    <property type="project" value="Ensembl"/>
</dbReference>
<dbReference type="GO" id="GO:0060348">
    <property type="term" value="P:bone development"/>
    <property type="evidence" value="ECO:0000316"/>
    <property type="project" value="MGI"/>
</dbReference>
<dbReference type="GO" id="GO:0048754">
    <property type="term" value="P:branching morphogenesis of an epithelial tube"/>
    <property type="evidence" value="ECO:0000315"/>
    <property type="project" value="MGI"/>
</dbReference>
<dbReference type="GO" id="GO:0016477">
    <property type="term" value="P:cell migration"/>
    <property type="evidence" value="ECO:0000315"/>
    <property type="project" value="MGI"/>
</dbReference>
<dbReference type="GO" id="GO:0035988">
    <property type="term" value="P:chondrocyte proliferation"/>
    <property type="evidence" value="ECO:0000316"/>
    <property type="project" value="MGI"/>
</dbReference>
<dbReference type="GO" id="GO:0030574">
    <property type="term" value="P:collagen catabolic process"/>
    <property type="evidence" value="ECO:0000316"/>
    <property type="project" value="MGI"/>
</dbReference>
<dbReference type="GO" id="GO:0097094">
    <property type="term" value="P:craniofacial suture morphogenesis"/>
    <property type="evidence" value="ECO:0000316"/>
    <property type="project" value="MGI"/>
</dbReference>
<dbReference type="GO" id="GO:0048701">
    <property type="term" value="P:embryonic cranial skeleton morphogenesis"/>
    <property type="evidence" value="ECO:0000316"/>
    <property type="project" value="MGI"/>
</dbReference>
<dbReference type="GO" id="GO:0001958">
    <property type="term" value="P:endochondral ossification"/>
    <property type="evidence" value="ECO:0000316"/>
    <property type="project" value="MGI"/>
</dbReference>
<dbReference type="GO" id="GO:0035987">
    <property type="term" value="P:endodermal cell differentiation"/>
    <property type="evidence" value="ECO:0007669"/>
    <property type="project" value="Ensembl"/>
</dbReference>
<dbReference type="GO" id="GO:0001935">
    <property type="term" value="P:endothelial cell proliferation"/>
    <property type="evidence" value="ECO:0007669"/>
    <property type="project" value="Ensembl"/>
</dbReference>
<dbReference type="GO" id="GO:0060322">
    <property type="term" value="P:head development"/>
    <property type="evidence" value="ECO:0000315"/>
    <property type="project" value="MGI"/>
</dbReference>
<dbReference type="GO" id="GO:0030324">
    <property type="term" value="P:lung development"/>
    <property type="evidence" value="ECO:0000315"/>
    <property type="project" value="MGI"/>
</dbReference>
<dbReference type="GO" id="GO:0008584">
    <property type="term" value="P:male gonad development"/>
    <property type="evidence" value="ECO:0007669"/>
    <property type="project" value="Ensembl"/>
</dbReference>
<dbReference type="GO" id="GO:0051895">
    <property type="term" value="P:negative regulation of focal adhesion assembly"/>
    <property type="evidence" value="ECO:0007669"/>
    <property type="project" value="Ensembl"/>
</dbReference>
<dbReference type="GO" id="GO:0160145">
    <property type="term" value="P:negative regulation of GDF15-GFRAL signaling pathway"/>
    <property type="evidence" value="ECO:0007669"/>
    <property type="project" value="Ensembl"/>
</dbReference>
<dbReference type="GO" id="GO:0045746">
    <property type="term" value="P:negative regulation of Notch signaling pathway"/>
    <property type="evidence" value="ECO:0000315"/>
    <property type="project" value="UniProtKB"/>
</dbReference>
<dbReference type="GO" id="GO:0001503">
    <property type="term" value="P:ossification"/>
    <property type="evidence" value="ECO:0000316"/>
    <property type="project" value="MGI"/>
</dbReference>
<dbReference type="GO" id="GO:0001541">
    <property type="term" value="P:ovarian follicle development"/>
    <property type="evidence" value="ECO:0007669"/>
    <property type="project" value="Ensembl"/>
</dbReference>
<dbReference type="GO" id="GO:0045579">
    <property type="term" value="P:positive regulation of B cell differentiation"/>
    <property type="evidence" value="ECO:0000315"/>
    <property type="project" value="UniProtKB"/>
</dbReference>
<dbReference type="GO" id="GO:0030307">
    <property type="term" value="P:positive regulation of cell growth"/>
    <property type="evidence" value="ECO:0007669"/>
    <property type="project" value="Ensembl"/>
</dbReference>
<dbReference type="GO" id="GO:1905523">
    <property type="term" value="P:positive regulation of macrophage migration"/>
    <property type="evidence" value="ECO:0000315"/>
    <property type="project" value="BHF-UCL"/>
</dbReference>
<dbReference type="GO" id="GO:0010831">
    <property type="term" value="P:positive regulation of myotube differentiation"/>
    <property type="evidence" value="ECO:0000315"/>
    <property type="project" value="UniProtKB"/>
</dbReference>
<dbReference type="GO" id="GO:0010954">
    <property type="term" value="P:positive regulation of protein processing"/>
    <property type="evidence" value="ECO:0007669"/>
    <property type="project" value="Ensembl"/>
</dbReference>
<dbReference type="GO" id="GO:0030163">
    <property type="term" value="P:protein catabolic process"/>
    <property type="evidence" value="ECO:0007669"/>
    <property type="project" value="Ensembl"/>
</dbReference>
<dbReference type="GO" id="GO:1903076">
    <property type="term" value="P:regulation of protein localization to plasma membrane"/>
    <property type="evidence" value="ECO:0007669"/>
    <property type="project" value="Ensembl"/>
</dbReference>
<dbReference type="GO" id="GO:0043627">
    <property type="term" value="P:response to estrogen"/>
    <property type="evidence" value="ECO:0007669"/>
    <property type="project" value="Ensembl"/>
</dbReference>
<dbReference type="GO" id="GO:0001666">
    <property type="term" value="P:response to hypoxia"/>
    <property type="evidence" value="ECO:0007669"/>
    <property type="project" value="Ensembl"/>
</dbReference>
<dbReference type="GO" id="GO:0009612">
    <property type="term" value="P:response to mechanical stimulus"/>
    <property type="evidence" value="ECO:0007669"/>
    <property type="project" value="Ensembl"/>
</dbReference>
<dbReference type="GO" id="GO:1990834">
    <property type="term" value="P:response to odorant"/>
    <property type="evidence" value="ECO:0007669"/>
    <property type="project" value="Ensembl"/>
</dbReference>
<dbReference type="GO" id="GO:0006979">
    <property type="term" value="P:response to oxidative stress"/>
    <property type="evidence" value="ECO:0007669"/>
    <property type="project" value="Ensembl"/>
</dbReference>
<dbReference type="GO" id="GO:0001501">
    <property type="term" value="P:skeletal system development"/>
    <property type="evidence" value="ECO:0000315"/>
    <property type="project" value="UniProtKB"/>
</dbReference>
<dbReference type="GO" id="GO:0048771">
    <property type="term" value="P:tissue remodeling"/>
    <property type="evidence" value="ECO:0007669"/>
    <property type="project" value="Ensembl"/>
</dbReference>
<dbReference type="GO" id="GO:0031638">
    <property type="term" value="P:zymogen activation"/>
    <property type="evidence" value="ECO:0000315"/>
    <property type="project" value="MGI"/>
</dbReference>
<dbReference type="CDD" id="cd00094">
    <property type="entry name" value="HX"/>
    <property type="match status" value="1"/>
</dbReference>
<dbReference type="CDD" id="cd04278">
    <property type="entry name" value="ZnMc_MMP"/>
    <property type="match status" value="1"/>
</dbReference>
<dbReference type="FunFam" id="3.40.390.10:FF:000005">
    <property type="entry name" value="Matrix metallopeptidase 16"/>
    <property type="match status" value="1"/>
</dbReference>
<dbReference type="FunFam" id="2.110.10.10:FF:000001">
    <property type="entry name" value="Matrix metallopeptidase 24"/>
    <property type="match status" value="1"/>
</dbReference>
<dbReference type="FunFam" id="1.10.101.10:FF:000002">
    <property type="entry name" value="Matrix metalloproteinase-14 preproprotein"/>
    <property type="match status" value="1"/>
</dbReference>
<dbReference type="Gene3D" id="3.40.390.10">
    <property type="entry name" value="Collagenase (Catalytic Domain)"/>
    <property type="match status" value="1"/>
</dbReference>
<dbReference type="Gene3D" id="2.110.10.10">
    <property type="entry name" value="Hemopexin-like domain"/>
    <property type="match status" value="1"/>
</dbReference>
<dbReference type="Gene3D" id="1.10.101.10">
    <property type="entry name" value="PGBD-like superfamily/PGBD"/>
    <property type="match status" value="1"/>
</dbReference>
<dbReference type="InterPro" id="IPR000585">
    <property type="entry name" value="Hemopexin-like_dom"/>
</dbReference>
<dbReference type="InterPro" id="IPR036375">
    <property type="entry name" value="Hemopexin-like_dom_sf"/>
</dbReference>
<dbReference type="InterPro" id="IPR018487">
    <property type="entry name" value="Hemopexin-like_repeat"/>
</dbReference>
<dbReference type="InterPro" id="IPR018486">
    <property type="entry name" value="Hemopexin_CS"/>
</dbReference>
<dbReference type="InterPro" id="IPR033739">
    <property type="entry name" value="M10A_MMP"/>
</dbReference>
<dbReference type="InterPro" id="IPR024079">
    <property type="entry name" value="MetalloPept_cat_dom_sf"/>
</dbReference>
<dbReference type="InterPro" id="IPR001818">
    <property type="entry name" value="Pept_M10_metallopeptidase"/>
</dbReference>
<dbReference type="InterPro" id="IPR021190">
    <property type="entry name" value="Pept_M10A"/>
</dbReference>
<dbReference type="InterPro" id="IPR021805">
    <property type="entry name" value="Pept_M10A_metallopeptidase_C"/>
</dbReference>
<dbReference type="InterPro" id="IPR021158">
    <property type="entry name" value="Pept_M10A_Zn_BS"/>
</dbReference>
<dbReference type="InterPro" id="IPR006026">
    <property type="entry name" value="Peptidase_Metallo"/>
</dbReference>
<dbReference type="InterPro" id="IPR002477">
    <property type="entry name" value="Peptidoglycan-bd-like"/>
</dbReference>
<dbReference type="InterPro" id="IPR036365">
    <property type="entry name" value="PGBD-like_sf"/>
</dbReference>
<dbReference type="InterPro" id="IPR036366">
    <property type="entry name" value="PGBDSf"/>
</dbReference>
<dbReference type="PANTHER" id="PTHR10201">
    <property type="entry name" value="MATRIX METALLOPROTEINASE"/>
    <property type="match status" value="1"/>
</dbReference>
<dbReference type="PANTHER" id="PTHR10201:SF24">
    <property type="entry name" value="MATRIX METALLOPROTEINASE-14"/>
    <property type="match status" value="1"/>
</dbReference>
<dbReference type="Pfam" id="PF11857">
    <property type="entry name" value="DUF3377"/>
    <property type="match status" value="1"/>
</dbReference>
<dbReference type="Pfam" id="PF00045">
    <property type="entry name" value="Hemopexin"/>
    <property type="match status" value="4"/>
</dbReference>
<dbReference type="Pfam" id="PF00413">
    <property type="entry name" value="Peptidase_M10"/>
    <property type="match status" value="1"/>
</dbReference>
<dbReference type="Pfam" id="PF01471">
    <property type="entry name" value="PG_binding_1"/>
    <property type="match status" value="1"/>
</dbReference>
<dbReference type="PIRSF" id="PIRSF001191">
    <property type="entry name" value="Peptidase_M10A_matrix"/>
    <property type="match status" value="1"/>
</dbReference>
<dbReference type="PRINTS" id="PR00138">
    <property type="entry name" value="MATRIXIN"/>
</dbReference>
<dbReference type="SMART" id="SM00120">
    <property type="entry name" value="HX"/>
    <property type="match status" value="4"/>
</dbReference>
<dbReference type="SMART" id="SM00235">
    <property type="entry name" value="ZnMc"/>
    <property type="match status" value="1"/>
</dbReference>
<dbReference type="SUPFAM" id="SSF50923">
    <property type="entry name" value="Hemopexin-like domain"/>
    <property type="match status" value="1"/>
</dbReference>
<dbReference type="SUPFAM" id="SSF55486">
    <property type="entry name" value="Metalloproteases ('zincins'), catalytic domain"/>
    <property type="match status" value="1"/>
</dbReference>
<dbReference type="SUPFAM" id="SSF47090">
    <property type="entry name" value="PGBD-like"/>
    <property type="match status" value="1"/>
</dbReference>
<dbReference type="PROSITE" id="PS00546">
    <property type="entry name" value="CYSTEINE_SWITCH"/>
    <property type="match status" value="1"/>
</dbReference>
<dbReference type="PROSITE" id="PS00024">
    <property type="entry name" value="HEMOPEXIN"/>
    <property type="match status" value="1"/>
</dbReference>
<dbReference type="PROSITE" id="PS51642">
    <property type="entry name" value="HEMOPEXIN_2"/>
    <property type="match status" value="4"/>
</dbReference>
<dbReference type="PROSITE" id="PS00142">
    <property type="entry name" value="ZINC_PROTEASE"/>
    <property type="match status" value="1"/>
</dbReference>
<protein>
    <recommendedName>
        <fullName>Matrix metalloproteinase-14</fullName>
        <shortName>MMP-14</shortName>
        <ecNumber evidence="12">3.4.24.80</ecNumber>
    </recommendedName>
    <alternativeName>
        <fullName>MMP-X1</fullName>
    </alternativeName>
    <alternativeName>
        <fullName>MT-MMP</fullName>
    </alternativeName>
    <alternativeName>
        <fullName>Membrane-type matrix metalloproteinase 1</fullName>
        <shortName>MT-MMP 1</shortName>
        <shortName>MTMMP1</shortName>
    </alternativeName>
    <alternativeName>
        <fullName>Membrane-type-1 matrix metalloproteinase</fullName>
        <shortName>MT1-MMP</shortName>
        <shortName>MT1MMP</shortName>
    </alternativeName>
</protein>